<accession>Q1GVC1</accession>
<gene>
    <name evidence="1" type="primary">pyrD</name>
    <name type="ordered locus">Sala_0680</name>
</gene>
<evidence type="ECO:0000255" key="1">
    <source>
        <dbReference type="HAMAP-Rule" id="MF_00225"/>
    </source>
</evidence>
<name>PYRD_SPHAL</name>
<feature type="chain" id="PRO_0000336492" description="Dihydroorotate dehydrogenase (quinone)">
    <location>
        <begin position="1"/>
        <end position="356"/>
    </location>
</feature>
<feature type="active site" description="Nucleophile" evidence="1">
    <location>
        <position position="181"/>
    </location>
</feature>
<feature type="binding site" evidence="1">
    <location>
        <begin position="67"/>
        <end position="71"/>
    </location>
    <ligand>
        <name>FMN</name>
        <dbReference type="ChEBI" id="CHEBI:58210"/>
    </ligand>
</feature>
<feature type="binding site" evidence="1">
    <location>
        <position position="71"/>
    </location>
    <ligand>
        <name>substrate</name>
    </ligand>
</feature>
<feature type="binding site" evidence="1">
    <location>
        <position position="91"/>
    </location>
    <ligand>
        <name>FMN</name>
        <dbReference type="ChEBI" id="CHEBI:58210"/>
    </ligand>
</feature>
<feature type="binding site" evidence="1">
    <location>
        <begin position="116"/>
        <end position="120"/>
    </location>
    <ligand>
        <name>substrate</name>
    </ligand>
</feature>
<feature type="binding site" evidence="1">
    <location>
        <position position="147"/>
    </location>
    <ligand>
        <name>FMN</name>
        <dbReference type="ChEBI" id="CHEBI:58210"/>
    </ligand>
</feature>
<feature type="binding site" evidence="1">
    <location>
        <position position="178"/>
    </location>
    <ligand>
        <name>FMN</name>
        <dbReference type="ChEBI" id="CHEBI:58210"/>
    </ligand>
</feature>
<feature type="binding site" evidence="1">
    <location>
        <position position="178"/>
    </location>
    <ligand>
        <name>substrate</name>
    </ligand>
</feature>
<feature type="binding site" evidence="1">
    <location>
        <position position="183"/>
    </location>
    <ligand>
        <name>substrate</name>
    </ligand>
</feature>
<feature type="binding site" evidence="1">
    <location>
        <position position="218"/>
    </location>
    <ligand>
        <name>FMN</name>
        <dbReference type="ChEBI" id="CHEBI:58210"/>
    </ligand>
</feature>
<feature type="binding site" evidence="1">
    <location>
        <position position="246"/>
    </location>
    <ligand>
        <name>FMN</name>
        <dbReference type="ChEBI" id="CHEBI:58210"/>
    </ligand>
</feature>
<feature type="binding site" evidence="1">
    <location>
        <begin position="247"/>
        <end position="248"/>
    </location>
    <ligand>
        <name>substrate</name>
    </ligand>
</feature>
<feature type="binding site" evidence="1">
    <location>
        <position position="268"/>
    </location>
    <ligand>
        <name>FMN</name>
        <dbReference type="ChEBI" id="CHEBI:58210"/>
    </ligand>
</feature>
<feature type="binding site" evidence="1">
    <location>
        <position position="297"/>
    </location>
    <ligand>
        <name>FMN</name>
        <dbReference type="ChEBI" id="CHEBI:58210"/>
    </ligand>
</feature>
<feature type="binding site" evidence="1">
    <location>
        <begin position="318"/>
        <end position="319"/>
    </location>
    <ligand>
        <name>FMN</name>
        <dbReference type="ChEBI" id="CHEBI:58210"/>
    </ligand>
</feature>
<keyword id="KW-1003">Cell membrane</keyword>
<keyword id="KW-0285">Flavoprotein</keyword>
<keyword id="KW-0288">FMN</keyword>
<keyword id="KW-0472">Membrane</keyword>
<keyword id="KW-0560">Oxidoreductase</keyword>
<keyword id="KW-0665">Pyrimidine biosynthesis</keyword>
<keyword id="KW-1185">Reference proteome</keyword>
<dbReference type="EC" id="1.3.5.2" evidence="1"/>
<dbReference type="EMBL" id="CP000356">
    <property type="protein sequence ID" value="ABF52401.1"/>
    <property type="molecule type" value="Genomic_DNA"/>
</dbReference>
<dbReference type="RefSeq" id="WP_011540991.1">
    <property type="nucleotide sequence ID" value="NC_008048.1"/>
</dbReference>
<dbReference type="SMR" id="Q1GVC1"/>
<dbReference type="STRING" id="317655.Sala_0680"/>
<dbReference type="KEGG" id="sal:Sala_0680"/>
<dbReference type="eggNOG" id="COG0167">
    <property type="taxonomic scope" value="Bacteria"/>
</dbReference>
<dbReference type="HOGENOM" id="CLU_013640_2_1_5"/>
<dbReference type="OrthoDB" id="9802377at2"/>
<dbReference type="UniPathway" id="UPA00070">
    <property type="reaction ID" value="UER00946"/>
</dbReference>
<dbReference type="Proteomes" id="UP000006578">
    <property type="component" value="Chromosome"/>
</dbReference>
<dbReference type="GO" id="GO:0005737">
    <property type="term" value="C:cytoplasm"/>
    <property type="evidence" value="ECO:0007669"/>
    <property type="project" value="InterPro"/>
</dbReference>
<dbReference type="GO" id="GO:0005886">
    <property type="term" value="C:plasma membrane"/>
    <property type="evidence" value="ECO:0007669"/>
    <property type="project" value="UniProtKB-SubCell"/>
</dbReference>
<dbReference type="GO" id="GO:0106430">
    <property type="term" value="F:dihydroorotate dehydrogenase (quinone) activity"/>
    <property type="evidence" value="ECO:0007669"/>
    <property type="project" value="UniProtKB-EC"/>
</dbReference>
<dbReference type="GO" id="GO:0006207">
    <property type="term" value="P:'de novo' pyrimidine nucleobase biosynthetic process"/>
    <property type="evidence" value="ECO:0007669"/>
    <property type="project" value="InterPro"/>
</dbReference>
<dbReference type="GO" id="GO:0044205">
    <property type="term" value="P:'de novo' UMP biosynthetic process"/>
    <property type="evidence" value="ECO:0007669"/>
    <property type="project" value="UniProtKB-UniRule"/>
</dbReference>
<dbReference type="CDD" id="cd04738">
    <property type="entry name" value="DHOD_2_like"/>
    <property type="match status" value="1"/>
</dbReference>
<dbReference type="Gene3D" id="3.20.20.70">
    <property type="entry name" value="Aldolase class I"/>
    <property type="match status" value="1"/>
</dbReference>
<dbReference type="HAMAP" id="MF_00225">
    <property type="entry name" value="DHO_dh_type2"/>
    <property type="match status" value="1"/>
</dbReference>
<dbReference type="InterPro" id="IPR013785">
    <property type="entry name" value="Aldolase_TIM"/>
</dbReference>
<dbReference type="InterPro" id="IPR050074">
    <property type="entry name" value="DHO_dehydrogenase"/>
</dbReference>
<dbReference type="InterPro" id="IPR005719">
    <property type="entry name" value="Dihydroorotate_DH_2"/>
</dbReference>
<dbReference type="InterPro" id="IPR005720">
    <property type="entry name" value="Dihydroorotate_DH_cat"/>
</dbReference>
<dbReference type="InterPro" id="IPR001295">
    <property type="entry name" value="Dihydroorotate_DH_CS"/>
</dbReference>
<dbReference type="NCBIfam" id="NF003645">
    <property type="entry name" value="PRK05286.1-2"/>
    <property type="match status" value="1"/>
</dbReference>
<dbReference type="NCBIfam" id="NF003652">
    <property type="entry name" value="PRK05286.2-5"/>
    <property type="match status" value="1"/>
</dbReference>
<dbReference type="NCBIfam" id="TIGR01036">
    <property type="entry name" value="pyrD_sub2"/>
    <property type="match status" value="1"/>
</dbReference>
<dbReference type="PANTHER" id="PTHR48109:SF4">
    <property type="entry name" value="DIHYDROOROTATE DEHYDROGENASE (QUINONE), MITOCHONDRIAL"/>
    <property type="match status" value="1"/>
</dbReference>
<dbReference type="PANTHER" id="PTHR48109">
    <property type="entry name" value="DIHYDROOROTATE DEHYDROGENASE (QUINONE), MITOCHONDRIAL-RELATED"/>
    <property type="match status" value="1"/>
</dbReference>
<dbReference type="Pfam" id="PF01180">
    <property type="entry name" value="DHO_dh"/>
    <property type="match status" value="1"/>
</dbReference>
<dbReference type="SUPFAM" id="SSF51395">
    <property type="entry name" value="FMN-linked oxidoreductases"/>
    <property type="match status" value="1"/>
</dbReference>
<dbReference type="PROSITE" id="PS00911">
    <property type="entry name" value="DHODEHASE_1"/>
    <property type="match status" value="1"/>
</dbReference>
<dbReference type="PROSITE" id="PS00912">
    <property type="entry name" value="DHODEHASE_2"/>
    <property type="match status" value="1"/>
</dbReference>
<sequence>MSLFASLTDAAYALARPLVHATDGEAAHNLTLAALQPLPRARHALTSPMLATELAGLRFPNPVGLAPGFDKDARVAHAMPHFGFGFVEVGTLTPLPQEGNPRPRLFRLVEDRAIINRMGFNNGGQVAAAERIACLRRHGLPVPLGINIGANKDSADRIADYAKGTAAMAPLADYLTVNISSPNTPGLRALQDRGALEALLDGVAAAQPAGAAKPVFLKVAPDLEPADIDDIVAVALDRGLAAVIVSNTTVARPPLASRHAVEAGGLSGAPLAQLALQCVQDFRAASGGRLPLIAAGGIASAEQAWERIRAGASLVQVYSAMVFEGPGLASRIARGLETLAARDGFARVSDAVGAGA</sequence>
<reference key="1">
    <citation type="journal article" date="2009" name="Proc. Natl. Acad. Sci. U.S.A.">
        <title>The genomic basis of trophic strategy in marine bacteria.</title>
        <authorList>
            <person name="Lauro F.M."/>
            <person name="McDougald D."/>
            <person name="Thomas T."/>
            <person name="Williams T.J."/>
            <person name="Egan S."/>
            <person name="Rice S."/>
            <person name="DeMaere M.Z."/>
            <person name="Ting L."/>
            <person name="Ertan H."/>
            <person name="Johnson J."/>
            <person name="Ferriera S."/>
            <person name="Lapidus A."/>
            <person name="Anderson I."/>
            <person name="Kyrpides N."/>
            <person name="Munk A.C."/>
            <person name="Detter C."/>
            <person name="Han C.S."/>
            <person name="Brown M.V."/>
            <person name="Robb F.T."/>
            <person name="Kjelleberg S."/>
            <person name="Cavicchioli R."/>
        </authorList>
    </citation>
    <scope>NUCLEOTIDE SEQUENCE [LARGE SCALE GENOMIC DNA]</scope>
    <source>
        <strain>DSM 13593 / LMG 18877 / RB2256</strain>
    </source>
</reference>
<comment type="function">
    <text evidence="1">Catalyzes the conversion of dihydroorotate to orotate with quinone as electron acceptor.</text>
</comment>
<comment type="catalytic activity">
    <reaction evidence="1">
        <text>(S)-dihydroorotate + a quinone = orotate + a quinol</text>
        <dbReference type="Rhea" id="RHEA:30187"/>
        <dbReference type="ChEBI" id="CHEBI:24646"/>
        <dbReference type="ChEBI" id="CHEBI:30839"/>
        <dbReference type="ChEBI" id="CHEBI:30864"/>
        <dbReference type="ChEBI" id="CHEBI:132124"/>
        <dbReference type="EC" id="1.3.5.2"/>
    </reaction>
</comment>
<comment type="cofactor">
    <cofactor evidence="1">
        <name>FMN</name>
        <dbReference type="ChEBI" id="CHEBI:58210"/>
    </cofactor>
    <text evidence="1">Binds 1 FMN per subunit.</text>
</comment>
<comment type="pathway">
    <text evidence="1">Pyrimidine metabolism; UMP biosynthesis via de novo pathway; orotate from (S)-dihydroorotate (quinone route): step 1/1.</text>
</comment>
<comment type="subunit">
    <text evidence="1">Monomer.</text>
</comment>
<comment type="subcellular location">
    <subcellularLocation>
        <location evidence="1">Cell membrane</location>
        <topology evidence="1">Peripheral membrane protein</topology>
    </subcellularLocation>
</comment>
<comment type="similarity">
    <text evidence="1">Belongs to the dihydroorotate dehydrogenase family. Type 2 subfamily.</text>
</comment>
<organism>
    <name type="scientific">Sphingopyxis alaskensis (strain DSM 13593 / LMG 18877 / RB2256)</name>
    <name type="common">Sphingomonas alaskensis</name>
    <dbReference type="NCBI Taxonomy" id="317655"/>
    <lineage>
        <taxon>Bacteria</taxon>
        <taxon>Pseudomonadati</taxon>
        <taxon>Pseudomonadota</taxon>
        <taxon>Alphaproteobacteria</taxon>
        <taxon>Sphingomonadales</taxon>
        <taxon>Sphingomonadaceae</taxon>
        <taxon>Sphingopyxis</taxon>
    </lineage>
</organism>
<proteinExistence type="inferred from homology"/>
<protein>
    <recommendedName>
        <fullName evidence="1">Dihydroorotate dehydrogenase (quinone)</fullName>
        <ecNumber evidence="1">1.3.5.2</ecNumber>
    </recommendedName>
    <alternativeName>
        <fullName evidence="1">DHOdehase</fullName>
        <shortName evidence="1">DHOD</shortName>
        <shortName evidence="1">DHODase</shortName>
    </alternativeName>
    <alternativeName>
        <fullName evidence="1">Dihydroorotate oxidase</fullName>
    </alternativeName>
</protein>